<name>UXUA_BRUMB</name>
<organism>
    <name type="scientific">Brucella melitensis biotype 2 (strain ATCC 23457)</name>
    <dbReference type="NCBI Taxonomy" id="546272"/>
    <lineage>
        <taxon>Bacteria</taxon>
        <taxon>Pseudomonadati</taxon>
        <taxon>Pseudomonadota</taxon>
        <taxon>Alphaproteobacteria</taxon>
        <taxon>Hyphomicrobiales</taxon>
        <taxon>Brucellaceae</taxon>
        <taxon>Brucella/Ochrobactrum group</taxon>
        <taxon>Brucella</taxon>
    </lineage>
</organism>
<gene>
    <name evidence="1" type="primary">uxuA</name>
    <name type="ordered locus">BMEA_B0793</name>
</gene>
<reference key="1">
    <citation type="submission" date="2009-03" db="EMBL/GenBank/DDBJ databases">
        <title>Brucella melitensis ATCC 23457 whole genome shotgun sequencing project.</title>
        <authorList>
            <person name="Setubal J.C."/>
            <person name="Boyle S."/>
            <person name="Crasta O.R."/>
            <person name="Gillespie J.J."/>
            <person name="Kenyon R.W."/>
            <person name="Lu J."/>
            <person name="Mane S."/>
            <person name="Nagrani S."/>
            <person name="Shallom J.M."/>
            <person name="Shallom S."/>
            <person name="Shukla M."/>
            <person name="Snyder E.E."/>
            <person name="Sobral B.W."/>
            <person name="Wattam A.R."/>
            <person name="Will R."/>
            <person name="Williams K."/>
            <person name="Yoo H."/>
            <person name="Munk C."/>
            <person name="Tapia R."/>
            <person name="Han C."/>
            <person name="Detter J.C."/>
            <person name="Bruce D."/>
            <person name="Brettin T.S."/>
        </authorList>
    </citation>
    <scope>NUCLEOTIDE SEQUENCE [LARGE SCALE GENOMIC DNA]</scope>
    <source>
        <strain>ATCC 23457</strain>
    </source>
</reference>
<protein>
    <recommendedName>
        <fullName evidence="1">Mannonate dehydratase</fullName>
        <ecNumber evidence="1">4.2.1.8</ecNumber>
    </recommendedName>
    <alternativeName>
        <fullName evidence="1">D-mannonate hydro-lyase</fullName>
    </alternativeName>
</protein>
<proteinExistence type="inferred from homology"/>
<feature type="chain" id="PRO_1000197923" description="Mannonate dehydratase">
    <location>
        <begin position="1"/>
        <end position="401"/>
    </location>
</feature>
<sequence>MRQAWRWFGPEAGVPLDAVRQAGATDIVSALHEVPIGQEWTSAQIVERKNLIESTPTGRHPLTWSVVESIPVSDDIKRSGKAARHDIGAWIASMEALARNDIKVICYNFMPVVDWCRTDLDYITSTGATAMRFDQDRFAAFDLHILRRKGAEKDYSEEDRIAARAIFEAMDETEIEQLIVNIASALPGSTTEPLTIPAFRKKLETYASIDAAHLRRNLVEFLEAVTPVADSLGVKLTLHPDDPPRSLFGLPRIASTEADYAAIFAAVPAQSNGMCFCTGSLGVRADNDLPAIARRFASRIHFSHLRATTREGDGRTFHEAAHLEGDVDMVGILRILLEEDRKRDAGQTIIFRSDHGHRMMDDLEKKVTPGYPVIGRMRGLAELRGIITALDACALEYDPNV</sequence>
<comment type="function">
    <text evidence="1">Catalyzes the dehydration of D-mannonate.</text>
</comment>
<comment type="catalytic activity">
    <reaction evidence="1">
        <text>D-mannonate = 2-dehydro-3-deoxy-D-gluconate + H2O</text>
        <dbReference type="Rhea" id="RHEA:20097"/>
        <dbReference type="ChEBI" id="CHEBI:15377"/>
        <dbReference type="ChEBI" id="CHEBI:17767"/>
        <dbReference type="ChEBI" id="CHEBI:57990"/>
        <dbReference type="EC" id="4.2.1.8"/>
    </reaction>
</comment>
<comment type="cofactor">
    <cofactor evidence="1">
        <name>Fe(2+)</name>
        <dbReference type="ChEBI" id="CHEBI:29033"/>
    </cofactor>
    <cofactor evidence="1">
        <name>Mn(2+)</name>
        <dbReference type="ChEBI" id="CHEBI:29035"/>
    </cofactor>
</comment>
<comment type="pathway">
    <text evidence="1">Carbohydrate metabolism; pentose and glucuronate interconversion.</text>
</comment>
<comment type="similarity">
    <text evidence="1">Belongs to the mannonate dehydratase family.</text>
</comment>
<keyword id="KW-0408">Iron</keyword>
<keyword id="KW-0456">Lyase</keyword>
<keyword id="KW-0464">Manganese</keyword>
<evidence type="ECO:0000255" key="1">
    <source>
        <dbReference type="HAMAP-Rule" id="MF_00106"/>
    </source>
</evidence>
<accession>C0RLW2</accession>
<dbReference type="EC" id="4.2.1.8" evidence="1"/>
<dbReference type="EMBL" id="CP001489">
    <property type="protein sequence ID" value="ACO02595.1"/>
    <property type="molecule type" value="Genomic_DNA"/>
</dbReference>
<dbReference type="RefSeq" id="WP_004682164.1">
    <property type="nucleotide sequence ID" value="NC_012442.1"/>
</dbReference>
<dbReference type="SMR" id="C0RLW2"/>
<dbReference type="GeneID" id="29595241"/>
<dbReference type="KEGG" id="bmi:BMEA_B0793"/>
<dbReference type="HOGENOM" id="CLU_058621_2_0_5"/>
<dbReference type="UniPathway" id="UPA00246"/>
<dbReference type="Proteomes" id="UP000001748">
    <property type="component" value="Chromosome II"/>
</dbReference>
<dbReference type="GO" id="GO:0008198">
    <property type="term" value="F:ferrous iron binding"/>
    <property type="evidence" value="ECO:0007669"/>
    <property type="project" value="TreeGrafter"/>
</dbReference>
<dbReference type="GO" id="GO:0030145">
    <property type="term" value="F:manganese ion binding"/>
    <property type="evidence" value="ECO:0007669"/>
    <property type="project" value="TreeGrafter"/>
</dbReference>
<dbReference type="GO" id="GO:0008927">
    <property type="term" value="F:mannonate dehydratase activity"/>
    <property type="evidence" value="ECO:0007669"/>
    <property type="project" value="UniProtKB-UniRule"/>
</dbReference>
<dbReference type="GO" id="GO:0042840">
    <property type="term" value="P:D-glucuronate catabolic process"/>
    <property type="evidence" value="ECO:0007669"/>
    <property type="project" value="TreeGrafter"/>
</dbReference>
<dbReference type="Gene3D" id="3.20.20.150">
    <property type="entry name" value="Divalent-metal-dependent TIM barrel enzymes"/>
    <property type="match status" value="1"/>
</dbReference>
<dbReference type="HAMAP" id="MF_00106">
    <property type="entry name" value="UxuA"/>
    <property type="match status" value="1"/>
</dbReference>
<dbReference type="InterPro" id="IPR004628">
    <property type="entry name" value="Man_deHydtase"/>
</dbReference>
<dbReference type="InterPro" id="IPR036237">
    <property type="entry name" value="Xyl_isomerase-like_sf"/>
</dbReference>
<dbReference type="NCBIfam" id="NF003027">
    <property type="entry name" value="PRK03906.1"/>
    <property type="match status" value="1"/>
</dbReference>
<dbReference type="NCBIfam" id="TIGR00695">
    <property type="entry name" value="uxuA"/>
    <property type="match status" value="1"/>
</dbReference>
<dbReference type="PANTHER" id="PTHR30387">
    <property type="entry name" value="MANNONATE DEHYDRATASE"/>
    <property type="match status" value="1"/>
</dbReference>
<dbReference type="PANTHER" id="PTHR30387:SF2">
    <property type="entry name" value="MANNONATE DEHYDRATASE"/>
    <property type="match status" value="1"/>
</dbReference>
<dbReference type="Pfam" id="PF03786">
    <property type="entry name" value="UxuA"/>
    <property type="match status" value="1"/>
</dbReference>
<dbReference type="PIRSF" id="PIRSF016049">
    <property type="entry name" value="Man_dehyd"/>
    <property type="match status" value="1"/>
</dbReference>
<dbReference type="SUPFAM" id="SSF51658">
    <property type="entry name" value="Xylose isomerase-like"/>
    <property type="match status" value="1"/>
</dbReference>